<name>PLP_RICPR</name>
<accession>Q9ZCX6</accession>
<comment type="catalytic activity">
    <reaction>
        <text>[protein]-peptidylproline (omega=180) = [protein]-peptidylproline (omega=0)</text>
        <dbReference type="Rhea" id="RHEA:16237"/>
        <dbReference type="Rhea" id="RHEA-COMP:10747"/>
        <dbReference type="Rhea" id="RHEA-COMP:10748"/>
        <dbReference type="ChEBI" id="CHEBI:83833"/>
        <dbReference type="ChEBI" id="CHEBI:83834"/>
        <dbReference type="EC" id="5.2.1.8"/>
    </reaction>
</comment>
<comment type="subcellular location">
    <subcellularLocation>
        <location evidence="1">Cell outer membrane</location>
    </subcellularLocation>
</comment>
<comment type="similarity">
    <text evidence="4">Belongs to the PpiC/parvulin rotamase family.</text>
</comment>
<sequence>MKKLSVIFLSVSMLSSIAFGDEDKVVATYKGGEVKESQIMQEFKPQLNLQSGETIKNFDDFPLQDQEKLIKIYVNNLLLKEEVAKSSITSSKEFQEKLENAKNQLAQQELLANYIKSNITDKMFDDEYNKYVDNLKGKEQIKVAHILVKSQKEANTVKTKLSKGGNFTKLAEEFSLDKATASNGGIIGYIILNQPGQLVPEFEQKAFALKVNEVSTPVKTSFGWHIIKVLEKKPVPIPTKEEAKVTIDNILAAEILKQYISDLEAKADLKIMLPKANSKTGS</sequence>
<proteinExistence type="inferred from homology"/>
<reference key="1">
    <citation type="journal article" date="1999" name="Biochemistry (Mosc.)">
        <title>Nucleotide sequence of the gene and features of the major outer membrane protein of a virulent Rickettsia prowazekii strain.</title>
        <authorList>
            <person name="Emelyanov V.V."/>
            <person name="Demyanova N.G."/>
        </authorList>
    </citation>
    <scope>NUCLEOTIDE SEQUENCE [GENOMIC DNA]</scope>
    <source>
        <strain>ATCC VR-142 / Breinl</strain>
    </source>
</reference>
<reference key="2">
    <citation type="journal article" date="1998" name="Nature">
        <title>The genome sequence of Rickettsia prowazekii and the origin of mitochondria.</title>
        <authorList>
            <person name="Andersson S.G.E."/>
            <person name="Zomorodipour A."/>
            <person name="Andersson J.O."/>
            <person name="Sicheritz-Ponten T."/>
            <person name="Alsmark U.C.M."/>
            <person name="Podowski R.M."/>
            <person name="Naeslund A.K."/>
            <person name="Eriksson A.-S."/>
            <person name="Winkler H.H."/>
            <person name="Kurland C.G."/>
        </authorList>
    </citation>
    <scope>NUCLEOTIDE SEQUENCE [LARGE SCALE GENOMIC DNA]</scope>
    <source>
        <strain>Madrid E</strain>
    </source>
</reference>
<reference key="3">
    <citation type="submission" date="2000-09" db="EMBL/GenBank/DDBJ databases">
        <title>Allelic plp gene from Rickettsia prowazekii Evir strain.</title>
        <authorList>
            <person name="Loukianov E.V."/>
            <person name="Emelyanov V.V."/>
        </authorList>
    </citation>
    <scope>NUCLEOTIDE SEQUENCE [GENOMIC DNA]</scope>
    <source>
        <strain>Evir</strain>
    </source>
</reference>
<protein>
    <recommendedName>
        <fullName>Parvulin-like PPIase</fullName>
        <ecNumber>5.2.1.8</ecNumber>
    </recommendedName>
    <alternativeName>
        <fullName>29.5 kDa outer membrane antigen</fullName>
    </alternativeName>
    <alternativeName>
        <fullName>Peptidyl-prolyl cis-trans isomerase plp</fullName>
    </alternativeName>
    <alternativeName>
        <fullName>Rotamase plp</fullName>
    </alternativeName>
</protein>
<feature type="signal peptide" evidence="2">
    <location>
        <begin position="1"/>
        <end position="20"/>
    </location>
</feature>
<feature type="chain" id="PRO_0000025545" description="Parvulin-like PPIase">
    <location>
        <begin position="21"/>
        <end position="282"/>
    </location>
</feature>
<feature type="domain" description="PpiC" evidence="3">
    <location>
        <begin position="138"/>
        <end position="231"/>
    </location>
</feature>
<evidence type="ECO:0000250" key="1"/>
<evidence type="ECO:0000255" key="2"/>
<evidence type="ECO:0000255" key="3">
    <source>
        <dbReference type="PROSITE-ProRule" id="PRU00278"/>
    </source>
</evidence>
<evidence type="ECO:0000305" key="4"/>
<keyword id="KW-0998">Cell outer membrane</keyword>
<keyword id="KW-0413">Isomerase</keyword>
<keyword id="KW-0472">Membrane</keyword>
<keyword id="KW-1185">Reference proteome</keyword>
<keyword id="KW-0697">Rotamase</keyword>
<keyword id="KW-0732">Signal</keyword>
<dbReference type="EC" id="5.2.1.8"/>
<dbReference type="EMBL" id="AJ235272">
    <property type="protein sequence ID" value="CAA15023.1"/>
    <property type="molecule type" value="Genomic_DNA"/>
</dbReference>
<dbReference type="EMBL" id="X89470">
    <property type="protein sequence ID" value="CAA61657.1"/>
    <property type="molecule type" value="Genomic_DNA"/>
</dbReference>
<dbReference type="EMBL" id="AJ279071">
    <property type="protein sequence ID" value="CAC10161.1"/>
    <property type="molecule type" value="Genomic_DNA"/>
</dbReference>
<dbReference type="PIR" id="E71662">
    <property type="entry name" value="E71662"/>
</dbReference>
<dbReference type="RefSeq" id="NP_220947.1">
    <property type="nucleotide sequence ID" value="NC_000963.1"/>
</dbReference>
<dbReference type="RefSeq" id="WP_004597887.1">
    <property type="nucleotide sequence ID" value="NC_000963.1"/>
</dbReference>
<dbReference type="SMR" id="Q9ZCX6"/>
<dbReference type="STRING" id="272947.gene:17555656"/>
<dbReference type="EnsemblBacteria" id="CAA15023">
    <property type="protein sequence ID" value="CAA15023"/>
    <property type="gene ID" value="CAA15023"/>
</dbReference>
<dbReference type="KEGG" id="rpr:RP576"/>
<dbReference type="PATRIC" id="fig|272947.5.peg.593"/>
<dbReference type="eggNOG" id="COG0760">
    <property type="taxonomic scope" value="Bacteria"/>
</dbReference>
<dbReference type="HOGENOM" id="CLU_034646_1_3_5"/>
<dbReference type="OrthoDB" id="14196at2"/>
<dbReference type="BRENDA" id="5.2.1.8">
    <property type="organism ID" value="5447"/>
</dbReference>
<dbReference type="Proteomes" id="UP000002480">
    <property type="component" value="Chromosome"/>
</dbReference>
<dbReference type="GO" id="GO:0009279">
    <property type="term" value="C:cell outer membrane"/>
    <property type="evidence" value="ECO:0007669"/>
    <property type="project" value="UniProtKB-SubCell"/>
</dbReference>
<dbReference type="GO" id="GO:0003755">
    <property type="term" value="F:peptidyl-prolyl cis-trans isomerase activity"/>
    <property type="evidence" value="ECO:0007669"/>
    <property type="project" value="UniProtKB-KW"/>
</dbReference>
<dbReference type="Gene3D" id="3.10.50.40">
    <property type="match status" value="1"/>
</dbReference>
<dbReference type="InterPro" id="IPR046357">
    <property type="entry name" value="PPIase_dom_sf"/>
</dbReference>
<dbReference type="InterPro" id="IPR000297">
    <property type="entry name" value="PPIase_PpiC"/>
</dbReference>
<dbReference type="InterPro" id="IPR050245">
    <property type="entry name" value="PrsA_foldase"/>
</dbReference>
<dbReference type="PANTHER" id="PTHR47245:SF2">
    <property type="entry name" value="PEPTIDYL-PROLYL CIS-TRANS ISOMERASE HP_0175-RELATED"/>
    <property type="match status" value="1"/>
</dbReference>
<dbReference type="PANTHER" id="PTHR47245">
    <property type="entry name" value="PEPTIDYLPROLYL ISOMERASE"/>
    <property type="match status" value="1"/>
</dbReference>
<dbReference type="Pfam" id="PF13616">
    <property type="entry name" value="Rotamase_3"/>
    <property type="match status" value="1"/>
</dbReference>
<dbReference type="SUPFAM" id="SSF54534">
    <property type="entry name" value="FKBP-like"/>
    <property type="match status" value="1"/>
</dbReference>
<dbReference type="PROSITE" id="PS50198">
    <property type="entry name" value="PPIC_PPIASE_2"/>
    <property type="match status" value="1"/>
</dbReference>
<organism>
    <name type="scientific">Rickettsia prowazekii (strain Madrid E)</name>
    <dbReference type="NCBI Taxonomy" id="272947"/>
    <lineage>
        <taxon>Bacteria</taxon>
        <taxon>Pseudomonadati</taxon>
        <taxon>Pseudomonadota</taxon>
        <taxon>Alphaproteobacteria</taxon>
        <taxon>Rickettsiales</taxon>
        <taxon>Rickettsiaceae</taxon>
        <taxon>Rickettsieae</taxon>
        <taxon>Rickettsia</taxon>
        <taxon>typhus group</taxon>
    </lineage>
</organism>
<gene>
    <name type="primary">plp</name>
    <name type="ordered locus">RP576</name>
</gene>